<organism>
    <name type="scientific">Saccharomyces cerevisiae (strain Lalvin EC1118 / Prise de mousse)</name>
    <name type="common">Baker's yeast</name>
    <dbReference type="NCBI Taxonomy" id="643680"/>
    <lineage>
        <taxon>Eukaryota</taxon>
        <taxon>Fungi</taxon>
        <taxon>Dikarya</taxon>
        <taxon>Ascomycota</taxon>
        <taxon>Saccharomycotina</taxon>
        <taxon>Saccharomycetes</taxon>
        <taxon>Saccharomycetales</taxon>
        <taxon>Saccharomycetaceae</taxon>
        <taxon>Saccharomyces</taxon>
    </lineage>
</organism>
<gene>
    <name type="ORF">EC1118_1L10_0100g</name>
</gene>
<accession>C8ZCS2</accession>
<dbReference type="EMBL" id="FN393078">
    <property type="protein sequence ID" value="CAY81188.1"/>
    <property type="molecule type" value="Genomic_DNA"/>
</dbReference>
<dbReference type="SMR" id="C8ZCS2"/>
<dbReference type="HOGENOM" id="CLU_127260_0_0_1"/>
<dbReference type="OrthoDB" id="21486at4893"/>
<dbReference type="Proteomes" id="UP000000286">
    <property type="component" value="Chromosome XII, Scaffold EC1118_1L10"/>
</dbReference>
<dbReference type="GO" id="GO:0005886">
    <property type="term" value="C:plasma membrane"/>
    <property type="evidence" value="ECO:0007669"/>
    <property type="project" value="TreeGrafter"/>
</dbReference>
<dbReference type="GO" id="GO:0015250">
    <property type="term" value="F:water channel activity"/>
    <property type="evidence" value="ECO:0007669"/>
    <property type="project" value="TreeGrafter"/>
</dbReference>
<dbReference type="FunFam" id="1.20.1080.10:FF:000048">
    <property type="entry name" value="Putative uncharacterized protein YLL053C"/>
    <property type="match status" value="1"/>
</dbReference>
<dbReference type="Gene3D" id="1.20.1080.10">
    <property type="entry name" value="Glycerol uptake facilitator protein"/>
    <property type="match status" value="1"/>
</dbReference>
<dbReference type="InterPro" id="IPR023271">
    <property type="entry name" value="Aquaporin-like"/>
</dbReference>
<dbReference type="InterPro" id="IPR034294">
    <property type="entry name" value="Aquaporin_transptr"/>
</dbReference>
<dbReference type="InterPro" id="IPR000425">
    <property type="entry name" value="MIP"/>
</dbReference>
<dbReference type="PANTHER" id="PTHR19139">
    <property type="entry name" value="AQUAPORIN TRANSPORTER"/>
    <property type="match status" value="1"/>
</dbReference>
<dbReference type="PANTHER" id="PTHR19139:SF199">
    <property type="entry name" value="MIP17260P"/>
    <property type="match status" value="1"/>
</dbReference>
<dbReference type="Pfam" id="PF00230">
    <property type="entry name" value="MIP"/>
    <property type="match status" value="1"/>
</dbReference>
<dbReference type="PRINTS" id="PR00783">
    <property type="entry name" value="MINTRINSICP"/>
</dbReference>
<dbReference type="SUPFAM" id="SSF81338">
    <property type="entry name" value="Aquaporin-like"/>
    <property type="match status" value="1"/>
</dbReference>
<keyword id="KW-0472">Membrane</keyword>
<keyword id="KW-0812">Transmembrane</keyword>
<keyword id="KW-1133">Transmembrane helix</keyword>
<reference key="1">
    <citation type="journal article" date="2009" name="Proc. Natl. Acad. Sci. U.S.A.">
        <title>Eukaryote-to-eukaryote gene transfer events revealed by the genome sequence of the wine yeast Saccharomyces cerevisiae EC1118.</title>
        <authorList>
            <person name="Novo M."/>
            <person name="Bigey F."/>
            <person name="Beyne E."/>
            <person name="Galeote V."/>
            <person name="Gavory F."/>
            <person name="Mallet S."/>
            <person name="Cambon B."/>
            <person name="Legras J.-L."/>
            <person name="Wincker P."/>
            <person name="Casaregola S."/>
            <person name="Dequin S."/>
        </authorList>
    </citation>
    <scope>NUCLEOTIDE SEQUENCE [LARGE SCALE GENOMIC DNA]</scope>
    <source>
        <strain>Lalvin EC1118 / Prise de mousse</strain>
    </source>
</reference>
<sequence length="152" mass="16456">MWFPQIIAGMAAGGAASAMTPGKVLFTNALGLGCSRSRGLFLEMFGTAVLCLTVLMTAVEKRETNFMAALPIGISLFMAHMALTGYTGTGVNPARSLGAAVAARYFPHYHWIYWISPLLGAFLAWSVWQLLQILDYTTYVNAEKAAGQKKED</sequence>
<name>YLL53_YEAS8</name>
<evidence type="ECO:0000250" key="1"/>
<evidence type="ECO:0000255" key="2"/>
<evidence type="ECO:0000305" key="3"/>
<feature type="chain" id="PRO_0000391660" description="Putative uncharacterized protein EC1118_1L10_0100g">
    <location>
        <begin position="1"/>
        <end position="152"/>
    </location>
</feature>
<feature type="topological domain" description="Cytoplasmic" evidence="1">
    <location>
        <begin position="1"/>
        <end position="5"/>
    </location>
</feature>
<feature type="transmembrane region" description="Helical" evidence="2">
    <location>
        <begin position="6"/>
        <end position="26"/>
    </location>
</feature>
<feature type="topological domain" description="Extracellular" evidence="1">
    <location>
        <begin position="27"/>
        <end position="38"/>
    </location>
</feature>
<feature type="transmembrane region" description="Helical" evidence="2">
    <location>
        <begin position="39"/>
        <end position="59"/>
    </location>
</feature>
<feature type="topological domain" description="Cytoplasmic" evidence="1">
    <location>
        <begin position="60"/>
        <end position="65"/>
    </location>
</feature>
<feature type="transmembrane region" description="Helical" evidence="2">
    <location>
        <begin position="66"/>
        <end position="86"/>
    </location>
</feature>
<feature type="topological domain" description="Extracellular" evidence="1">
    <location>
        <begin position="87"/>
        <end position="110"/>
    </location>
</feature>
<feature type="transmembrane region" description="Helical" evidence="2">
    <location>
        <begin position="111"/>
        <end position="131"/>
    </location>
</feature>
<feature type="topological domain" description="Cytoplasmic" evidence="1">
    <location>
        <begin position="132"/>
        <end position="152"/>
    </location>
</feature>
<feature type="short sequence motif" description="NPA">
    <location>
        <begin position="92"/>
        <end position="94"/>
    </location>
</feature>
<protein>
    <recommendedName>
        <fullName>Putative uncharacterized protein EC1118_1L10_0100g</fullName>
    </recommendedName>
</protein>
<comment type="subcellular location">
    <subcellularLocation>
        <location evidence="3">Membrane</location>
        <topology evidence="3">Multi-pass membrane protein</topology>
    </subcellularLocation>
</comment>
<comment type="similarity">
    <text evidence="3">Belongs to the MIP/aquaporin (TC 1.A.8) family.</text>
</comment>
<comment type="caution">
    <text evidence="3">Could be the product of a pseudogene. This is the C-terminal part of aquaporin-2. A natural 11 bp deletion in position 109 leads to a frameshift, which disrupts the gene coding for this protein and produces two ORFs EC1118_1L10_0111g and EC1118_1L10_0100g. A contiguous sequence for aquaporin-2 can be found in strain Sigma 1278B (AC P0CD89).</text>
</comment>
<proteinExistence type="uncertain"/>